<sequence>MHIHDWPTHERPREKLLARGATALSDAELLAIFVGSGLRGQDAVQTARDLLHRHGPLRLLLDRPAKTLARLPGLGPASACKLAAAMELAQRHLMSALERGEALSDPPSVGRYFSQRLRARAYEVFAALFLDNRHRAIAFEELFTGTIDGADIHPREVVRRALLHNAAAVIVGHNHPSGNPEPSEADRAVTKRLLDSLELVDIRLLDHFVIGDGRPVSFAERGWLE</sequence>
<feature type="chain" id="PRO_1000001703" description="UPF0758 protein XCV4028">
    <location>
        <begin position="1"/>
        <end position="225"/>
    </location>
</feature>
<feature type="domain" description="MPN" evidence="1">
    <location>
        <begin position="102"/>
        <end position="224"/>
    </location>
</feature>
<feature type="short sequence motif" description="JAMM motif" evidence="1">
    <location>
        <begin position="173"/>
        <end position="186"/>
    </location>
</feature>
<feature type="binding site" evidence="1">
    <location>
        <position position="173"/>
    </location>
    <ligand>
        <name>Zn(2+)</name>
        <dbReference type="ChEBI" id="CHEBI:29105"/>
        <note>catalytic</note>
    </ligand>
</feature>
<feature type="binding site" evidence="1">
    <location>
        <position position="175"/>
    </location>
    <ligand>
        <name>Zn(2+)</name>
        <dbReference type="ChEBI" id="CHEBI:29105"/>
        <note>catalytic</note>
    </ligand>
</feature>
<feature type="binding site" evidence="1">
    <location>
        <position position="186"/>
    </location>
    <ligand>
        <name>Zn(2+)</name>
        <dbReference type="ChEBI" id="CHEBI:29105"/>
        <note>catalytic</note>
    </ligand>
</feature>
<organism>
    <name type="scientific">Xanthomonas euvesicatoria pv. vesicatoria (strain 85-10)</name>
    <name type="common">Xanthomonas campestris pv. vesicatoria</name>
    <dbReference type="NCBI Taxonomy" id="316273"/>
    <lineage>
        <taxon>Bacteria</taxon>
        <taxon>Pseudomonadati</taxon>
        <taxon>Pseudomonadota</taxon>
        <taxon>Gammaproteobacteria</taxon>
        <taxon>Lysobacterales</taxon>
        <taxon>Lysobacteraceae</taxon>
        <taxon>Xanthomonas</taxon>
    </lineage>
</organism>
<name>Y4028_XANE5</name>
<dbReference type="EMBL" id="AM039952">
    <property type="protein sequence ID" value="CAJ25759.1"/>
    <property type="molecule type" value="Genomic_DNA"/>
</dbReference>
<dbReference type="SMR" id="Q3BNA4"/>
<dbReference type="STRING" id="456327.BJD11_02470"/>
<dbReference type="KEGG" id="xcv:XCV4028"/>
<dbReference type="eggNOG" id="COG2003">
    <property type="taxonomic scope" value="Bacteria"/>
</dbReference>
<dbReference type="HOGENOM" id="CLU_073529_0_1_6"/>
<dbReference type="Proteomes" id="UP000007069">
    <property type="component" value="Chromosome"/>
</dbReference>
<dbReference type="GO" id="GO:0046872">
    <property type="term" value="F:metal ion binding"/>
    <property type="evidence" value="ECO:0007669"/>
    <property type="project" value="UniProtKB-KW"/>
</dbReference>
<dbReference type="GO" id="GO:0008237">
    <property type="term" value="F:metallopeptidase activity"/>
    <property type="evidence" value="ECO:0007669"/>
    <property type="project" value="UniProtKB-KW"/>
</dbReference>
<dbReference type="GO" id="GO:0006508">
    <property type="term" value="P:proteolysis"/>
    <property type="evidence" value="ECO:0007669"/>
    <property type="project" value="UniProtKB-KW"/>
</dbReference>
<dbReference type="CDD" id="cd08071">
    <property type="entry name" value="MPN_DUF2466"/>
    <property type="match status" value="1"/>
</dbReference>
<dbReference type="Gene3D" id="3.40.140.10">
    <property type="entry name" value="Cytidine Deaminase, domain 2"/>
    <property type="match status" value="1"/>
</dbReference>
<dbReference type="InterPro" id="IPR037518">
    <property type="entry name" value="MPN"/>
</dbReference>
<dbReference type="InterPro" id="IPR025657">
    <property type="entry name" value="RadC_JAB"/>
</dbReference>
<dbReference type="InterPro" id="IPR010994">
    <property type="entry name" value="RuvA_2-like"/>
</dbReference>
<dbReference type="InterPro" id="IPR001405">
    <property type="entry name" value="UPF0758"/>
</dbReference>
<dbReference type="InterPro" id="IPR020891">
    <property type="entry name" value="UPF0758_CS"/>
</dbReference>
<dbReference type="InterPro" id="IPR046778">
    <property type="entry name" value="UPF0758_N"/>
</dbReference>
<dbReference type="NCBIfam" id="NF000642">
    <property type="entry name" value="PRK00024.1"/>
    <property type="match status" value="1"/>
</dbReference>
<dbReference type="NCBIfam" id="TIGR00608">
    <property type="entry name" value="radc"/>
    <property type="match status" value="1"/>
</dbReference>
<dbReference type="PANTHER" id="PTHR30471">
    <property type="entry name" value="DNA REPAIR PROTEIN RADC"/>
    <property type="match status" value="1"/>
</dbReference>
<dbReference type="PANTHER" id="PTHR30471:SF3">
    <property type="entry name" value="UPF0758 PROTEIN YEES-RELATED"/>
    <property type="match status" value="1"/>
</dbReference>
<dbReference type="Pfam" id="PF04002">
    <property type="entry name" value="RadC"/>
    <property type="match status" value="1"/>
</dbReference>
<dbReference type="Pfam" id="PF20582">
    <property type="entry name" value="UPF0758_N"/>
    <property type="match status" value="1"/>
</dbReference>
<dbReference type="SUPFAM" id="SSF47781">
    <property type="entry name" value="RuvA domain 2-like"/>
    <property type="match status" value="1"/>
</dbReference>
<dbReference type="PROSITE" id="PS50249">
    <property type="entry name" value="MPN"/>
    <property type="match status" value="1"/>
</dbReference>
<dbReference type="PROSITE" id="PS01302">
    <property type="entry name" value="UPF0758"/>
    <property type="match status" value="1"/>
</dbReference>
<reference key="1">
    <citation type="journal article" date="2005" name="J. Bacteriol.">
        <title>Insights into genome plasticity and pathogenicity of the plant pathogenic Bacterium Xanthomonas campestris pv. vesicatoria revealed by the complete genome sequence.</title>
        <authorList>
            <person name="Thieme F."/>
            <person name="Koebnik R."/>
            <person name="Bekel T."/>
            <person name="Berger C."/>
            <person name="Boch J."/>
            <person name="Buettner D."/>
            <person name="Caldana C."/>
            <person name="Gaigalat L."/>
            <person name="Goesmann A."/>
            <person name="Kay S."/>
            <person name="Kirchner O."/>
            <person name="Lanz C."/>
            <person name="Linke B."/>
            <person name="McHardy A.C."/>
            <person name="Meyer F."/>
            <person name="Mittenhuber G."/>
            <person name="Nies D.H."/>
            <person name="Niesbach-Kloesgen U."/>
            <person name="Patschkowski T."/>
            <person name="Rueckert C."/>
            <person name="Rupp O."/>
            <person name="Schneiker S."/>
            <person name="Schuster S.C."/>
            <person name="Vorhoelter F.J."/>
            <person name="Weber E."/>
            <person name="Puehler A."/>
            <person name="Bonas U."/>
            <person name="Bartels D."/>
            <person name="Kaiser O."/>
        </authorList>
    </citation>
    <scope>NUCLEOTIDE SEQUENCE [LARGE SCALE GENOMIC DNA]</scope>
    <source>
        <strain>85-10</strain>
    </source>
</reference>
<keyword id="KW-0378">Hydrolase</keyword>
<keyword id="KW-0479">Metal-binding</keyword>
<keyword id="KW-0482">Metalloprotease</keyword>
<keyword id="KW-0645">Protease</keyword>
<keyword id="KW-0862">Zinc</keyword>
<evidence type="ECO:0000255" key="1">
    <source>
        <dbReference type="PROSITE-ProRule" id="PRU01182"/>
    </source>
</evidence>
<evidence type="ECO:0000305" key="2"/>
<protein>
    <recommendedName>
        <fullName>UPF0758 protein XCV4028</fullName>
    </recommendedName>
</protein>
<gene>
    <name type="ordered locus">XCV4028</name>
</gene>
<proteinExistence type="inferred from homology"/>
<comment type="similarity">
    <text evidence="2">Belongs to the UPF0758 family.</text>
</comment>
<accession>Q3BNA4</accession>